<dbReference type="EMBL" id="DQ234985">
    <property type="protein sequence ID" value="ABB72145.1"/>
    <property type="molecule type" value="Genomic_DNA"/>
</dbReference>
<dbReference type="SMR" id="A7X8C4"/>
<dbReference type="GO" id="GO:0005737">
    <property type="term" value="C:cytoplasm"/>
    <property type="evidence" value="ECO:0007669"/>
    <property type="project" value="UniProtKB-SubCell"/>
</dbReference>
<dbReference type="GO" id="GO:0005654">
    <property type="term" value="C:nucleoplasm"/>
    <property type="evidence" value="ECO:0007669"/>
    <property type="project" value="UniProtKB-ARBA"/>
</dbReference>
<dbReference type="GO" id="GO:0003707">
    <property type="term" value="F:nuclear steroid receptor activity"/>
    <property type="evidence" value="ECO:0007669"/>
    <property type="project" value="InterPro"/>
</dbReference>
<dbReference type="GO" id="GO:0043565">
    <property type="term" value="F:sequence-specific DNA binding"/>
    <property type="evidence" value="ECO:0007669"/>
    <property type="project" value="InterPro"/>
</dbReference>
<dbReference type="GO" id="GO:0005496">
    <property type="term" value="F:steroid binding"/>
    <property type="evidence" value="ECO:0007669"/>
    <property type="project" value="UniProtKB-KW"/>
</dbReference>
<dbReference type="GO" id="GO:0008270">
    <property type="term" value="F:zinc ion binding"/>
    <property type="evidence" value="ECO:0007669"/>
    <property type="project" value="UniProtKB-KW"/>
</dbReference>
<dbReference type="CDD" id="cd07172">
    <property type="entry name" value="NR_DBD_GR_PR"/>
    <property type="match status" value="1"/>
</dbReference>
<dbReference type="CDD" id="cd07074">
    <property type="entry name" value="NR_LBD_PR"/>
    <property type="match status" value="1"/>
</dbReference>
<dbReference type="FunFam" id="1.10.565.10:FF:000004">
    <property type="entry name" value="Androgen receptor variant"/>
    <property type="match status" value="1"/>
</dbReference>
<dbReference type="FunFam" id="3.30.50.10:FF:000027">
    <property type="entry name" value="Progesterone receptor"/>
    <property type="match status" value="1"/>
</dbReference>
<dbReference type="Gene3D" id="3.30.50.10">
    <property type="entry name" value="Erythroid Transcription Factor GATA-1, subunit A"/>
    <property type="match status" value="1"/>
</dbReference>
<dbReference type="Gene3D" id="1.10.565.10">
    <property type="entry name" value="Retinoid X Receptor"/>
    <property type="match status" value="1"/>
</dbReference>
<dbReference type="InterPro" id="IPR035500">
    <property type="entry name" value="NHR-like_dom_sf"/>
</dbReference>
<dbReference type="InterPro" id="IPR000536">
    <property type="entry name" value="Nucl_hrmn_rcpt_lig-bd"/>
</dbReference>
<dbReference type="InterPro" id="IPR050200">
    <property type="entry name" value="Nuclear_hormone_rcpt_NR3"/>
</dbReference>
<dbReference type="InterPro" id="IPR001723">
    <property type="entry name" value="Nuclear_hrmn_rcpt"/>
</dbReference>
<dbReference type="InterPro" id="IPR000128">
    <property type="entry name" value="Progest_rcpt"/>
</dbReference>
<dbReference type="InterPro" id="IPR001628">
    <property type="entry name" value="Znf_hrmn_rcpt"/>
</dbReference>
<dbReference type="InterPro" id="IPR013088">
    <property type="entry name" value="Znf_NHR/GATA"/>
</dbReference>
<dbReference type="PANTHER" id="PTHR48092">
    <property type="entry name" value="KNIRPS-RELATED PROTEIN-RELATED"/>
    <property type="match status" value="1"/>
</dbReference>
<dbReference type="Pfam" id="PF00104">
    <property type="entry name" value="Hormone_recep"/>
    <property type="match status" value="1"/>
</dbReference>
<dbReference type="Pfam" id="PF02161">
    <property type="entry name" value="Prog_receptor"/>
    <property type="match status" value="1"/>
</dbReference>
<dbReference type="Pfam" id="PF00105">
    <property type="entry name" value="zf-C4"/>
    <property type="match status" value="1"/>
</dbReference>
<dbReference type="PRINTS" id="PR00544">
    <property type="entry name" value="PROGESTRONER"/>
</dbReference>
<dbReference type="PRINTS" id="PR00398">
    <property type="entry name" value="STRDHORMONER"/>
</dbReference>
<dbReference type="PRINTS" id="PR00047">
    <property type="entry name" value="STROIDFINGER"/>
</dbReference>
<dbReference type="SMART" id="SM00430">
    <property type="entry name" value="HOLI"/>
    <property type="match status" value="1"/>
</dbReference>
<dbReference type="SMART" id="SM00399">
    <property type="entry name" value="ZnF_C4"/>
    <property type="match status" value="1"/>
</dbReference>
<dbReference type="SUPFAM" id="SSF57716">
    <property type="entry name" value="Glucocorticoid receptor-like (DNA-binding domain)"/>
    <property type="match status" value="1"/>
</dbReference>
<dbReference type="SUPFAM" id="SSF48508">
    <property type="entry name" value="Nuclear receptor ligand-binding domain"/>
    <property type="match status" value="1"/>
</dbReference>
<dbReference type="PROSITE" id="PS51843">
    <property type="entry name" value="NR_LBD"/>
    <property type="match status" value="1"/>
</dbReference>
<dbReference type="PROSITE" id="PS00031">
    <property type="entry name" value="NUCLEAR_REC_DBD_1"/>
    <property type="match status" value="1"/>
</dbReference>
<dbReference type="PROSITE" id="PS51030">
    <property type="entry name" value="NUCLEAR_REC_DBD_2"/>
    <property type="match status" value="1"/>
</dbReference>
<proteinExistence type="inferred from homology"/>
<keyword id="KW-0963">Cytoplasm</keyword>
<keyword id="KW-0238">DNA-binding</keyword>
<keyword id="KW-1017">Isopeptide bond</keyword>
<keyword id="KW-0446">Lipid-binding</keyword>
<keyword id="KW-0449">Lipoprotein</keyword>
<keyword id="KW-0479">Metal-binding</keyword>
<keyword id="KW-0539">Nucleus</keyword>
<keyword id="KW-0564">Palmitate</keyword>
<keyword id="KW-0597">Phosphoprotein</keyword>
<keyword id="KW-0675">Receptor</keyword>
<keyword id="KW-0754">Steroid-binding</keyword>
<keyword id="KW-0804">Transcription</keyword>
<keyword id="KW-0805">Transcription regulation</keyword>
<keyword id="KW-0832">Ubl conjugation</keyword>
<keyword id="KW-0862">Zinc</keyword>
<keyword id="KW-0863">Zinc-finger</keyword>
<evidence type="ECO:0000250" key="1"/>
<evidence type="ECO:0000250" key="2">
    <source>
        <dbReference type="UniProtKB" id="P06401"/>
    </source>
</evidence>
<evidence type="ECO:0000250" key="3">
    <source>
        <dbReference type="UniProtKB" id="Q00175"/>
    </source>
</evidence>
<evidence type="ECO:0000255" key="4"/>
<evidence type="ECO:0000255" key="5">
    <source>
        <dbReference type="PROSITE-ProRule" id="PRU00407"/>
    </source>
</evidence>
<evidence type="ECO:0000255" key="6">
    <source>
        <dbReference type="PROSITE-ProRule" id="PRU01189"/>
    </source>
</evidence>
<evidence type="ECO:0000256" key="7">
    <source>
        <dbReference type="SAM" id="MobiDB-lite"/>
    </source>
</evidence>
<evidence type="ECO:0000305" key="8"/>
<sequence length="935" mass="99213">MTELKAKGPRAPHVAGGPPSPEVGSPLLCRPAAGPFQGSQTSDTLPEVSATPISLDGLLFPRPCQGQDPLDEKTQDQQSLSDVEGAYSRAEATRGTGGSSSRPPEKDSGLLDSVLDTLLAPSGPGQSQPSPPACEVTSSWCLFGPELPEDPPAAPATQRVLSPLMSRSGGKAGDSSGTAAAHKVLPRGLSPSRQLLLPASGSPHWSGAPVKPSPQPAAVEVEEEDGSESEDSAGPLLKGKPRALGGAAAGGGAAAVPPGAAAGGVALVPKEDSRFSAPRVALVEQDAPMAPGRSPLATTTMDFTHVPILPLNHALLAARTRQLLEEESYDGGAGAASAFAPPRSSPSASSTPVAVGDFPDCAYPPDAHPKDDAYPLYGDFQPPALKIKEEEEGAEVSARSPRSYLVAGANPAAFPDFPLGPPPPLPPRAPPSRPGEAAVTAAPAGASVSSASSSGSTLECILYKAEGAPPQQGPFAPPPCKAQGAGGCLLPRDGLPSTSTSASAAAAGAAPALYPALGLNGLPQLGYQAAVLKEGLQQVYPPYLNYLRPDSEASQSPQYSFESLPQKICLICGDEASGCHYGVLTCGSCKVFFKRAMEGQHNYLCAGRNDCIVDKIRRKNCPACRLRKCCQAGMVLGGRKFKKFNKVRVMRALDAVALPQPVGIPNESQALSQRFTFSPGQDIQLIPPLINLLVSIEPDVIYAGHDNSKPDTSSSLLTSLNQLGERQLLSVVKWSKLLPGFRNLHIDDQITLIQYSWMSLMVFGLGWRSYKHVSGQMLYFAPDLILNEQRMKESSFYSLCLTMWQIPQEFVKLQVSQEEFLCMKVLLLLNTIPLEGLRSQTQFEEMRSSYIRELIKAIGLRQKGVVSSSQRFYQLTKLLDNLHDLVKQLHLYCLNTFIQSRALSVEFPEMMSEVIAAQLPKILAGMVKPLLFHKK</sequence>
<reference key="1">
    <citation type="journal article" date="2008" name="Mol. Phylogenet. Evol.">
        <title>The human progesterone receptor shows evidence of adaptive evolution associated with its ability to act as a transcription factor.</title>
        <authorList>
            <person name="Chen C."/>
            <person name="Opazo J.C."/>
            <person name="Erez O."/>
            <person name="Uddin M."/>
            <person name="Santolaya-Forgas J."/>
            <person name="Goodman M."/>
            <person name="Grossman L.I."/>
            <person name="Romero R."/>
            <person name="Wildman D.E."/>
        </authorList>
    </citation>
    <scope>NUCLEOTIDE SEQUENCE [GENOMIC DNA]</scope>
</reference>
<name>PRGR_MACSY</name>
<organism>
    <name type="scientific">Macaca sylvanus</name>
    <name type="common">Barbary macaque</name>
    <dbReference type="NCBI Taxonomy" id="9546"/>
    <lineage>
        <taxon>Eukaryota</taxon>
        <taxon>Metazoa</taxon>
        <taxon>Chordata</taxon>
        <taxon>Craniata</taxon>
        <taxon>Vertebrata</taxon>
        <taxon>Euteleostomi</taxon>
        <taxon>Mammalia</taxon>
        <taxon>Eutheria</taxon>
        <taxon>Euarchontoglires</taxon>
        <taxon>Primates</taxon>
        <taxon>Haplorrhini</taxon>
        <taxon>Catarrhini</taxon>
        <taxon>Cercopithecidae</taxon>
        <taxon>Cercopithecinae</taxon>
        <taxon>Macaca</taxon>
    </lineage>
</organism>
<protein>
    <recommendedName>
        <fullName>Progesterone receptor</fullName>
        <shortName>PR</shortName>
    </recommendedName>
    <alternativeName>
        <fullName>Nuclear receptor subfamily 3 group C member 3</fullName>
    </alternativeName>
</protein>
<accession>A7X8C4</accession>
<comment type="function">
    <text evidence="2">The steroid hormones and their receptors are involved in the regulation of eukaryotic gene expression and affect cellular proliferation and differentiation in target tissues. Transcriptional activator of several progesteron-dependent promoters in a variety of cell types. Involved in activation of SRC-dependent MAPK signaling on hormone stimulation.</text>
</comment>
<comment type="subunit">
    <text evidence="2 3">Interacts with SMARD1 and UNC45A. Interacts with CUEDC2; the interaction promotes ubiquitination, decreases sumoylation, and represses transcriptional activity. Interacts with PIAS3; the interaction promotes sumoylation of PR in a hormone-dependent manner, inhibits DNA-binding, and alters nuclear export. Interacts with SP1; the interaction requires ligand-induced phosphorylation on Ser-345 by ERK1/2-MAPK. Interacts with PRMT2. Interacts with NCOA2 and NCOA1. Interacts with KLF9. Interacts with GTF2B (By similarity).</text>
</comment>
<comment type="subcellular location">
    <subcellularLocation>
        <location>Nucleus</location>
    </subcellularLocation>
    <subcellularLocation>
        <location>Cytoplasm</location>
    </subcellularLocation>
    <text evidence="1">Nucleoplasmic shuttling is both hormone- and cell cycle-dependent. On hormone stimulation, retained in the cytoplasm in the G(1) and G(2)/M phases (By similarity).</text>
</comment>
<comment type="domain">
    <text>Composed of three domains: a modulating N-terminal domain, a DNA-binding domain and a C-terminal ligand-binding domain.</text>
</comment>
<comment type="PTM">
    <text evidence="1">Phosphorylated on multiple serine sites. Several of these sites are hormone-dependent. Phosphorylation on Ser-294 is highly hormone-dependent and modulates ubiquitination and sumoylation on Lys-388. Phosphorylation on Ser-345 also requires induction by hormone. Basal phosphorylation on Ser-81, Ser-162, Ser-190 and Ser-400 is increased in response to progesterone and can be phosphorylated in vitro by the CDK2-A1 complex. Increased levels of phosphorylation on Ser-400 also in the presence of EGF, heregulin, IGF, PMA and FBS. Phosphorylation at this site by CDK2 is ligand-independent, and increases nuclear translocation and transcriptional activity. Phosphorylation at Ser-162 and Ser-294, but not at Ser-190, is impaired during the G(2)/M phase of the cell cycle. Phosphorylation on Ser-345 by ERK1/2 MAPK is required for interaction with SP1 (By similarity).</text>
</comment>
<comment type="PTM">
    <text evidence="1">Sumoylation is hormone-dependent and represses transcriptional activity. Sumoylation on all three sites is enhanced by PIAS3. Desumoylated by SENP1. Sumoylation on Lys-388, the main site of sumoylation, is repressed by ubiquitination on the same site, and modulated by phosphorylation at Ser-294 (By similarity).</text>
</comment>
<comment type="PTM">
    <text evidence="2">Ubiquitination is hormone-dependent and represses sumoylation on the same site (By similarity). Promoted by MAPK-mediated phosphorylation on Ser-294 (By similarity). Ubiquitinated by UBR5, leading to its degradation: UBR5 specifically recognizes and binds ligand-bound PGR when it is not associated with coactivators (NCOAs) (By similarity). In presence of NCOAs, the UBR5-degron is not accessible, preventing its ubiquitination and degradation (By similarity).</text>
</comment>
<comment type="PTM">
    <text evidence="1">Palmitoylated by ZDHHC7 and ZDHHC21. Palmitoylation is required for plasma membrane targeting and for rapid intracellular signaling via ERK and AKT kinases and cAMP generation (By similarity).</text>
</comment>
<comment type="similarity">
    <text evidence="8">Belongs to the nuclear hormone receptor family.</text>
</comment>
<feature type="chain" id="PRO_0000375856" description="Progesterone receptor">
    <location>
        <begin position="1"/>
        <end position="935"/>
    </location>
</feature>
<feature type="domain" description="NR LBD" evidence="6">
    <location>
        <begin position="681"/>
        <end position="915"/>
    </location>
</feature>
<feature type="DNA-binding region" description="Nuclear receptor" evidence="5">
    <location>
        <begin position="569"/>
        <end position="641"/>
    </location>
</feature>
<feature type="zinc finger region" description="NR C4-type" evidence="5">
    <location>
        <begin position="569"/>
        <end position="589"/>
    </location>
</feature>
<feature type="zinc finger region" description="NR C4-type" evidence="5">
    <location>
        <begin position="605"/>
        <end position="629"/>
    </location>
</feature>
<feature type="region of interest" description="Modulating, Pro-Rich">
    <location>
        <begin position="1"/>
        <end position="568"/>
    </location>
</feature>
<feature type="region of interest" description="Disordered" evidence="7">
    <location>
        <begin position="1"/>
        <end position="256"/>
    </location>
</feature>
<feature type="region of interest" description="AF3; mediates transcriptional activation" evidence="2">
    <location>
        <begin position="1"/>
        <end position="164"/>
    </location>
</feature>
<feature type="region of interest" description="Mediates transcriptional transrepression" evidence="2">
    <location>
        <begin position="165"/>
        <end position="305"/>
    </location>
</feature>
<feature type="region of interest" description="Disordered" evidence="7">
    <location>
        <begin position="328"/>
        <end position="353"/>
    </location>
</feature>
<feature type="region of interest" description="Disordered" evidence="7">
    <location>
        <begin position="415"/>
        <end position="452"/>
    </location>
</feature>
<feature type="region of interest" description="AF1; mediates transcriptional activation" evidence="2">
    <location>
        <begin position="456"/>
        <end position="548"/>
    </location>
</feature>
<feature type="region of interest" description="AF2; mediates transcriptional activation" evidence="2">
    <location>
        <begin position="689"/>
        <end position="935"/>
    </location>
</feature>
<feature type="short sequence motif" description="LXXL motif 1" evidence="2">
    <location>
        <begin position="55"/>
        <end position="59"/>
    </location>
</feature>
<feature type="short sequence motif" description="LXXL motif 2" evidence="2">
    <location>
        <begin position="115"/>
        <end position="119"/>
    </location>
</feature>
<feature type="short sequence motif" description="Nuclear localization signal" evidence="4">
    <location>
        <begin position="183"/>
        <end position="187"/>
    </location>
</feature>
<feature type="compositionally biased region" description="Acidic residues" evidence="7">
    <location>
        <begin position="220"/>
        <end position="231"/>
    </location>
</feature>
<feature type="compositionally biased region" description="Low complexity" evidence="7">
    <location>
        <begin position="232"/>
        <end position="246"/>
    </location>
</feature>
<feature type="compositionally biased region" description="Low complexity" evidence="7">
    <location>
        <begin position="335"/>
        <end position="350"/>
    </location>
</feature>
<feature type="compositionally biased region" description="Pro residues" evidence="7">
    <location>
        <begin position="418"/>
        <end position="433"/>
    </location>
</feature>
<feature type="compositionally biased region" description="Low complexity" evidence="7">
    <location>
        <begin position="434"/>
        <end position="452"/>
    </location>
</feature>
<feature type="binding site" evidence="2">
    <location>
        <position position="768"/>
    </location>
    <ligand>
        <name>progesterone</name>
        <dbReference type="ChEBI" id="CHEBI:17026"/>
    </ligand>
</feature>
<feature type="modified residue" description="Phosphoserine" evidence="2">
    <location>
        <position position="20"/>
    </location>
</feature>
<feature type="modified residue" description="Phosphoserine" evidence="2">
    <location>
        <position position="81"/>
    </location>
</feature>
<feature type="modified residue" description="Phosphoserine" evidence="2">
    <location>
        <position position="130"/>
    </location>
</feature>
<feature type="modified residue" description="Phosphoserine" evidence="2">
    <location>
        <position position="162"/>
    </location>
</feature>
<feature type="modified residue" description="Phosphoserine" evidence="2">
    <location>
        <position position="190"/>
    </location>
</feature>
<feature type="modified residue" description="Phosphoserine" evidence="2">
    <location>
        <position position="213"/>
    </location>
</feature>
<feature type="modified residue" description="Phosphoserine; by MAPK1" evidence="2">
    <location>
        <position position="294"/>
    </location>
</feature>
<feature type="modified residue" description="Phosphoserine; by MAPK" evidence="2">
    <location>
        <position position="345"/>
    </location>
</feature>
<feature type="modified residue" description="Phosphoserine; by CDK2" evidence="2">
    <location>
        <position position="400"/>
    </location>
</feature>
<feature type="modified residue" description="Phosphoserine" evidence="2">
    <location>
        <position position="678"/>
    </location>
</feature>
<feature type="cross-link" description="Glycyl lysine isopeptide (Lys-Gly) (interchain with G-Cter in SUMO); alternate" evidence="1">
    <location>
        <position position="388"/>
    </location>
</feature>
<feature type="cross-link" description="Glycyl lysine isopeptide (Lys-Gly) (interchain with G-Cter in ubiquitin); alternate" evidence="2">
    <location>
        <position position="388"/>
    </location>
</feature>
<feature type="cross-link" description="Glycyl lysine isopeptide (Lys-Gly) (interchain with G-Cter in SUMO)" evidence="1">
    <location>
        <position position="533"/>
    </location>
</feature>
<gene>
    <name type="primary">PGR</name>
    <name type="synonym">NR3C3</name>
</gene>